<accession>Q5ZC82</accession>
<accession>A0A0N7KD87</accession>
<feature type="chain" id="PRO_0000395052" description="Cytokinin riboside 5'-monophosphate phosphoribohydrolase LOG">
    <location>
        <begin position="1"/>
        <end position="242"/>
    </location>
</feature>
<feature type="region of interest" description="Disordered" evidence="2">
    <location>
        <begin position="9"/>
        <end position="30"/>
    </location>
</feature>
<feature type="compositionally biased region" description="Low complexity" evidence="2">
    <location>
        <begin position="9"/>
        <end position="22"/>
    </location>
</feature>
<feature type="binding site" evidence="1">
    <location>
        <position position="106"/>
    </location>
    <ligand>
        <name>substrate</name>
    </ligand>
</feature>
<feature type="binding site" evidence="1">
    <location>
        <begin position="124"/>
        <end position="125"/>
    </location>
    <ligand>
        <name>substrate</name>
    </ligand>
</feature>
<feature type="binding site" evidence="1">
    <location>
        <begin position="141"/>
        <end position="147"/>
    </location>
    <ligand>
        <name>substrate</name>
    </ligand>
</feature>
<feature type="binding site" evidence="1">
    <location>
        <position position="153"/>
    </location>
    <ligand>
        <name>substrate</name>
    </ligand>
</feature>
<feature type="mutagenesis site" description="In LOG-4; decreased activity." evidence="3">
    <original>G</original>
    <variation>D</variation>
    <location>
        <position position="73"/>
    </location>
</feature>
<name>LOG_ORYSJ</name>
<comment type="function">
    <text evidence="3 4">Cytokinin-activating enzyme working in the direct activation pathway. Controls the shoot meristem activity. Phosphoribohydrolase that converts inactive cytokinin nucleotides to the biologically active free-base forms. Reacts specifically with cytokinin nucleoside 5'-monophosphates, but not with di- or triphosphate.</text>
</comment>
<comment type="catalytic activity">
    <reaction evidence="3">
        <text>N(6)-(dimethylallyl)adenosine 5'-phosphate + H2O = N(6)-dimethylallyladenine + D-ribose 5-phosphate</text>
        <dbReference type="Rhea" id="RHEA:48560"/>
        <dbReference type="ChEBI" id="CHEBI:15377"/>
        <dbReference type="ChEBI" id="CHEBI:17660"/>
        <dbReference type="ChEBI" id="CHEBI:57526"/>
        <dbReference type="ChEBI" id="CHEBI:78346"/>
        <dbReference type="EC" id="3.2.2.n1"/>
    </reaction>
</comment>
<comment type="catalytic activity">
    <reaction evidence="3">
        <text>9-ribosyl-trans-zeatin 5'-phosphate + H2O = trans-zeatin + D-ribose 5-phosphate</text>
        <dbReference type="Rhea" id="RHEA:48564"/>
        <dbReference type="ChEBI" id="CHEBI:15377"/>
        <dbReference type="ChEBI" id="CHEBI:16522"/>
        <dbReference type="ChEBI" id="CHEBI:78346"/>
        <dbReference type="ChEBI" id="CHEBI:87947"/>
        <dbReference type="EC" id="3.2.2.n1"/>
    </reaction>
</comment>
<comment type="biophysicochemical properties">
    <kinetics>
        <KM evidence="3">11.7 uM for N(6)-(Delta(2)-isopentenyl)-adenosine 5'-phosphate</KM>
        <KM evidence="3">22 uM for trans-zeatine riboside monophosphate</KM>
        <Vmax evidence="3">5.6 umol/min/mg enzyme with N(6)-(Delta(2)-isopentenyl)-adenosine 5'-phosphate as substrate</Vmax>
        <Vmax evidence="3">4.2 umol/min/mg enzyme with trans-zeatine riboside monophosphate as substrate</Vmax>
        <text>can also use benzyladenosine 5'-phosphate as substrate, but no activity with cytokinin ribosides.</text>
    </kinetics>
    <phDependence>
        <text evidence="3">Optimum pH is 6.5.</text>
    </phDependence>
</comment>
<comment type="subcellular location">
    <subcellularLocation>
        <location evidence="3">Cytoplasm</location>
    </subcellularLocation>
</comment>
<comment type="tissue specificity">
    <text evidence="3">Expressed in roots, leaves, stems, tiller buds, immature inflorescences and flowers. Expressed in the upper part of shoot meristems, including axillary meristems, meristems of developing panicle and floral meristems.</text>
</comment>
<comment type="disruption phenotype">
    <text evidence="3">Premature termination of the floral meristem.</text>
</comment>
<comment type="miscellaneous">
    <text>The name lonely guy came from the fact that flowers of the mutants often contained only one stamen but no pistil.</text>
</comment>
<comment type="similarity">
    <text evidence="5">Belongs to the LOG family.</text>
</comment>
<protein>
    <recommendedName>
        <fullName>Cytokinin riboside 5'-monophosphate phosphoribohydrolase LOG</fullName>
        <ecNumber>3.2.2.n1</ecNumber>
    </recommendedName>
    <alternativeName>
        <fullName>Protein LONELY GUY</fullName>
    </alternativeName>
</protein>
<reference key="1">
    <citation type="journal article" date="2002" name="Nature">
        <title>The genome sequence and structure of rice chromosome 1.</title>
        <authorList>
            <person name="Sasaki T."/>
            <person name="Matsumoto T."/>
            <person name="Yamamoto K."/>
            <person name="Sakata K."/>
            <person name="Baba T."/>
            <person name="Katayose Y."/>
            <person name="Wu J."/>
            <person name="Niimura Y."/>
            <person name="Cheng Z."/>
            <person name="Nagamura Y."/>
            <person name="Antonio B.A."/>
            <person name="Kanamori H."/>
            <person name="Hosokawa S."/>
            <person name="Masukawa M."/>
            <person name="Arikawa K."/>
            <person name="Chiden Y."/>
            <person name="Hayashi M."/>
            <person name="Okamoto M."/>
            <person name="Ando T."/>
            <person name="Aoki H."/>
            <person name="Arita K."/>
            <person name="Hamada M."/>
            <person name="Harada C."/>
            <person name="Hijishita S."/>
            <person name="Honda M."/>
            <person name="Ichikawa Y."/>
            <person name="Idonuma A."/>
            <person name="Iijima M."/>
            <person name="Ikeda M."/>
            <person name="Ikeno M."/>
            <person name="Ito S."/>
            <person name="Ito T."/>
            <person name="Ito Y."/>
            <person name="Ito Y."/>
            <person name="Iwabuchi A."/>
            <person name="Kamiya K."/>
            <person name="Karasawa W."/>
            <person name="Katagiri S."/>
            <person name="Kikuta A."/>
            <person name="Kobayashi N."/>
            <person name="Kono I."/>
            <person name="Machita K."/>
            <person name="Maehara T."/>
            <person name="Mizuno H."/>
            <person name="Mizubayashi T."/>
            <person name="Mukai Y."/>
            <person name="Nagasaki H."/>
            <person name="Nakashima M."/>
            <person name="Nakama Y."/>
            <person name="Nakamichi Y."/>
            <person name="Nakamura M."/>
            <person name="Namiki N."/>
            <person name="Negishi M."/>
            <person name="Ohta I."/>
            <person name="Ono N."/>
            <person name="Saji S."/>
            <person name="Sakai K."/>
            <person name="Shibata M."/>
            <person name="Shimokawa T."/>
            <person name="Shomura A."/>
            <person name="Song J."/>
            <person name="Takazaki Y."/>
            <person name="Terasawa K."/>
            <person name="Tsuji K."/>
            <person name="Waki K."/>
            <person name="Yamagata H."/>
            <person name="Yamane H."/>
            <person name="Yoshiki S."/>
            <person name="Yoshihara R."/>
            <person name="Yukawa K."/>
            <person name="Zhong H."/>
            <person name="Iwama H."/>
            <person name="Endo T."/>
            <person name="Ito H."/>
            <person name="Hahn J.H."/>
            <person name="Kim H.-I."/>
            <person name="Eun M.-Y."/>
            <person name="Yano M."/>
            <person name="Jiang J."/>
            <person name="Gojobori T."/>
        </authorList>
    </citation>
    <scope>NUCLEOTIDE SEQUENCE [LARGE SCALE GENOMIC DNA]</scope>
    <source>
        <strain>cv. Nipponbare</strain>
    </source>
</reference>
<reference key="2">
    <citation type="journal article" date="2005" name="Nature">
        <title>The map-based sequence of the rice genome.</title>
        <authorList>
            <consortium name="International rice genome sequencing project (IRGSP)"/>
        </authorList>
    </citation>
    <scope>NUCLEOTIDE SEQUENCE [LARGE SCALE GENOMIC DNA]</scope>
    <source>
        <strain>cv. Nipponbare</strain>
    </source>
</reference>
<reference key="3">
    <citation type="journal article" date="2008" name="Nucleic Acids Res.">
        <title>The rice annotation project database (RAP-DB): 2008 update.</title>
        <authorList>
            <consortium name="The rice annotation project (RAP)"/>
        </authorList>
    </citation>
    <scope>GENOME REANNOTATION</scope>
    <source>
        <strain>cv. Nipponbare</strain>
    </source>
</reference>
<reference key="4">
    <citation type="journal article" date="2013" name="Rice">
        <title>Improvement of the Oryza sativa Nipponbare reference genome using next generation sequence and optical map data.</title>
        <authorList>
            <person name="Kawahara Y."/>
            <person name="de la Bastide M."/>
            <person name="Hamilton J.P."/>
            <person name="Kanamori H."/>
            <person name="McCombie W.R."/>
            <person name="Ouyang S."/>
            <person name="Schwartz D.C."/>
            <person name="Tanaka T."/>
            <person name="Wu J."/>
            <person name="Zhou S."/>
            <person name="Childs K.L."/>
            <person name="Davidson R.M."/>
            <person name="Lin H."/>
            <person name="Quesada-Ocampo L."/>
            <person name="Vaillancourt B."/>
            <person name="Sakai H."/>
            <person name="Lee S.S."/>
            <person name="Kim J."/>
            <person name="Numa H."/>
            <person name="Itoh T."/>
            <person name="Buell C.R."/>
            <person name="Matsumoto T."/>
        </authorList>
    </citation>
    <scope>GENOME REANNOTATION</scope>
    <source>
        <strain>cv. Nipponbare</strain>
    </source>
</reference>
<reference key="5">
    <citation type="journal article" date="2005" name="PLoS Biol.">
        <title>The genomes of Oryza sativa: a history of duplications.</title>
        <authorList>
            <person name="Yu J."/>
            <person name="Wang J."/>
            <person name="Lin W."/>
            <person name="Li S."/>
            <person name="Li H."/>
            <person name="Zhou J."/>
            <person name="Ni P."/>
            <person name="Dong W."/>
            <person name="Hu S."/>
            <person name="Zeng C."/>
            <person name="Zhang J."/>
            <person name="Zhang Y."/>
            <person name="Li R."/>
            <person name="Xu Z."/>
            <person name="Li S."/>
            <person name="Li X."/>
            <person name="Zheng H."/>
            <person name="Cong L."/>
            <person name="Lin L."/>
            <person name="Yin J."/>
            <person name="Geng J."/>
            <person name="Li G."/>
            <person name="Shi J."/>
            <person name="Liu J."/>
            <person name="Lv H."/>
            <person name="Li J."/>
            <person name="Wang J."/>
            <person name="Deng Y."/>
            <person name="Ran L."/>
            <person name="Shi X."/>
            <person name="Wang X."/>
            <person name="Wu Q."/>
            <person name="Li C."/>
            <person name="Ren X."/>
            <person name="Wang J."/>
            <person name="Wang X."/>
            <person name="Li D."/>
            <person name="Liu D."/>
            <person name="Zhang X."/>
            <person name="Ji Z."/>
            <person name="Zhao W."/>
            <person name="Sun Y."/>
            <person name="Zhang Z."/>
            <person name="Bao J."/>
            <person name="Han Y."/>
            <person name="Dong L."/>
            <person name="Ji J."/>
            <person name="Chen P."/>
            <person name="Wu S."/>
            <person name="Liu J."/>
            <person name="Xiao Y."/>
            <person name="Bu D."/>
            <person name="Tan J."/>
            <person name="Yang L."/>
            <person name="Ye C."/>
            <person name="Zhang J."/>
            <person name="Xu J."/>
            <person name="Zhou Y."/>
            <person name="Yu Y."/>
            <person name="Zhang B."/>
            <person name="Zhuang S."/>
            <person name="Wei H."/>
            <person name="Liu B."/>
            <person name="Lei M."/>
            <person name="Yu H."/>
            <person name="Li Y."/>
            <person name="Xu H."/>
            <person name="Wei S."/>
            <person name="He X."/>
            <person name="Fang L."/>
            <person name="Zhang Z."/>
            <person name="Zhang Y."/>
            <person name="Huang X."/>
            <person name="Su Z."/>
            <person name="Tong W."/>
            <person name="Li J."/>
            <person name="Tong Z."/>
            <person name="Li S."/>
            <person name="Ye J."/>
            <person name="Wang L."/>
            <person name="Fang L."/>
            <person name="Lei T."/>
            <person name="Chen C.-S."/>
            <person name="Chen H.-C."/>
            <person name="Xu Z."/>
            <person name="Li H."/>
            <person name="Huang H."/>
            <person name="Zhang F."/>
            <person name="Xu H."/>
            <person name="Li N."/>
            <person name="Zhao C."/>
            <person name="Li S."/>
            <person name="Dong L."/>
            <person name="Huang Y."/>
            <person name="Li L."/>
            <person name="Xi Y."/>
            <person name="Qi Q."/>
            <person name="Li W."/>
            <person name="Zhang B."/>
            <person name="Hu W."/>
            <person name="Zhang Y."/>
            <person name="Tian X."/>
            <person name="Jiao Y."/>
            <person name="Liang X."/>
            <person name="Jin J."/>
            <person name="Gao L."/>
            <person name="Zheng W."/>
            <person name="Hao B."/>
            <person name="Liu S.-M."/>
            <person name="Wang W."/>
            <person name="Yuan L."/>
            <person name="Cao M."/>
            <person name="McDermott J."/>
            <person name="Samudrala R."/>
            <person name="Wang J."/>
            <person name="Wong G.K.-S."/>
            <person name="Yang H."/>
        </authorList>
    </citation>
    <scope>NUCLEOTIDE SEQUENCE [LARGE SCALE GENOMIC DNA]</scope>
    <source>
        <strain>cv. Nipponbare</strain>
    </source>
</reference>
<reference key="6">
    <citation type="journal article" date="2003" name="Science">
        <title>Collection, mapping, and annotation of over 28,000 cDNA clones from japonica rice.</title>
        <authorList>
            <consortium name="The rice full-length cDNA consortium"/>
        </authorList>
    </citation>
    <scope>NUCLEOTIDE SEQUENCE [LARGE SCALE MRNA]</scope>
    <source>
        <strain>cv. Nipponbare</strain>
    </source>
</reference>
<reference key="7">
    <citation type="journal article" date="2007" name="Nature">
        <title>Direct control of shoot meristem activity by a cytokinin-activating enzyme.</title>
        <authorList>
            <person name="Kurakawa T."/>
            <person name="Ueda N."/>
            <person name="Maekawa M."/>
            <person name="Kobayashi K."/>
            <person name="Kojima M."/>
            <person name="Nagato Y."/>
            <person name="Sakakibara H."/>
            <person name="Kyozuka J."/>
        </authorList>
    </citation>
    <scope>FUNCTION</scope>
    <scope>CATALYTIC ACTIVITY</scope>
    <scope>TISSUE SPECIFICITY</scope>
    <scope>SUBCELLULAR LOCATION</scope>
    <scope>BIOPHYSICOCHEMICAL PROPERTIES</scope>
    <scope>MUTAGENESIS OF GLY-73</scope>
    <scope>DISRUPTION PHENOTYPE</scope>
</reference>
<reference key="8">
    <citation type="journal article" date="2009" name="Plant Cell">
        <title>Functional analyses of LONELY GUY cytokinin-activating enzymes reveal the importance of the direct activation pathway in Arabidopsis.</title>
        <authorList>
            <person name="Kuroha T."/>
            <person name="Tokunaga H."/>
            <person name="Kojima M."/>
            <person name="Ueda N."/>
            <person name="Ishida T."/>
            <person name="Nagawa S."/>
            <person name="Fukuda H."/>
            <person name="Sugimoto K."/>
            <person name="Sakakibara H."/>
        </authorList>
    </citation>
    <scope>FUNCTION</scope>
    <scope>GENE FAMILY</scope>
    <scope>NOMENCLATURE</scope>
</reference>
<sequence length="242" mass="25846">MAMEAAAERSAGAGAAATAAPESGGGGAGERRSRFRRICVYCGSAKGRKASYQDAAVELGKELVERGIDLVYGGGSIGLMGLVSHAVHDGGRHVIGVIPKSLMPREVTGEPVGEVRAVSGMHERKAEMARFADAFIALPGGYGTLEELLEVITWAQLGIHKKPVGLLNVDGFYDPFLSFIDMAVSEGFIAEDARRIIISAPTARELVLKLEEYVPEYEVGLVWDDQMPHSFAPDLETRITSS</sequence>
<dbReference type="EC" id="3.2.2.n1"/>
<dbReference type="EMBL" id="AP003243">
    <property type="protein sequence ID" value="BAD52880.1"/>
    <property type="molecule type" value="Genomic_DNA"/>
</dbReference>
<dbReference type="EMBL" id="AP008207">
    <property type="protein sequence ID" value="BAF05353.1"/>
    <property type="molecule type" value="Genomic_DNA"/>
</dbReference>
<dbReference type="EMBL" id="AP014957">
    <property type="protein sequence ID" value="BAS72929.1"/>
    <property type="molecule type" value="Genomic_DNA"/>
</dbReference>
<dbReference type="EMBL" id="CM000138">
    <property type="protein sequence ID" value="EAZ12515.1"/>
    <property type="molecule type" value="Genomic_DNA"/>
</dbReference>
<dbReference type="EMBL" id="AK071695">
    <property type="protein sequence ID" value="BAG92633.1"/>
    <property type="molecule type" value="mRNA"/>
</dbReference>
<dbReference type="RefSeq" id="XP_015621391.1">
    <property type="nucleotide sequence ID" value="XM_015765905.1"/>
</dbReference>
<dbReference type="SMR" id="Q5ZC82"/>
<dbReference type="FunCoup" id="Q5ZC82">
    <property type="interactions" value="10"/>
</dbReference>
<dbReference type="STRING" id="39947.Q5ZC82"/>
<dbReference type="PaxDb" id="39947-Q5ZC82"/>
<dbReference type="EnsemblPlants" id="Os01t0588900-01">
    <property type="protein sequence ID" value="Os01t0588900-01"/>
    <property type="gene ID" value="Os01g0588900"/>
</dbReference>
<dbReference type="Gramene" id="Os01t0588900-01">
    <property type="protein sequence ID" value="Os01t0588900-01"/>
    <property type="gene ID" value="Os01g0588900"/>
</dbReference>
<dbReference type="KEGG" id="dosa:Os01g0588900"/>
<dbReference type="eggNOG" id="ENOG502QSR9">
    <property type="taxonomic scope" value="Eukaryota"/>
</dbReference>
<dbReference type="HOGENOM" id="CLU_058336_2_2_1"/>
<dbReference type="InParanoid" id="Q5ZC82"/>
<dbReference type="OMA" id="FHRICVY"/>
<dbReference type="OrthoDB" id="414463at2759"/>
<dbReference type="BioCyc" id="MetaCyc:MONOMER-15646"/>
<dbReference type="PlantReactome" id="R-OSA-9608575">
    <property type="pathway name" value="Reproductive meristem phase change"/>
</dbReference>
<dbReference type="Proteomes" id="UP000000763">
    <property type="component" value="Chromosome 1"/>
</dbReference>
<dbReference type="Proteomes" id="UP000007752">
    <property type="component" value="Chromosome 1"/>
</dbReference>
<dbReference type="Proteomes" id="UP000059680">
    <property type="component" value="Chromosome 1"/>
</dbReference>
<dbReference type="ExpressionAtlas" id="Q5ZC82">
    <property type="expression patterns" value="baseline and differential"/>
</dbReference>
<dbReference type="GO" id="GO:0005829">
    <property type="term" value="C:cytosol"/>
    <property type="evidence" value="ECO:0000318"/>
    <property type="project" value="GO_Central"/>
</dbReference>
<dbReference type="GO" id="GO:0005634">
    <property type="term" value="C:nucleus"/>
    <property type="evidence" value="ECO:0000318"/>
    <property type="project" value="GO_Central"/>
</dbReference>
<dbReference type="GO" id="GO:0102682">
    <property type="term" value="F:cytokinin riboside 5'-monophosphate phosphoribohydrolase activity"/>
    <property type="evidence" value="ECO:0000318"/>
    <property type="project" value="GO_Central"/>
</dbReference>
<dbReference type="GO" id="GO:0009691">
    <property type="term" value="P:cytokinin biosynthetic process"/>
    <property type="evidence" value="ECO:0000314"/>
    <property type="project" value="UniProtKB"/>
</dbReference>
<dbReference type="GO" id="GO:0048509">
    <property type="term" value="P:regulation of meristem development"/>
    <property type="evidence" value="ECO:0000315"/>
    <property type="project" value="UniProtKB"/>
</dbReference>
<dbReference type="FunFam" id="3.40.50.450:FF:000005">
    <property type="entry name" value="CASP-like protein"/>
    <property type="match status" value="1"/>
</dbReference>
<dbReference type="Gene3D" id="3.40.50.450">
    <property type="match status" value="1"/>
</dbReference>
<dbReference type="InterPro" id="IPR005269">
    <property type="entry name" value="LOG"/>
</dbReference>
<dbReference type="InterPro" id="IPR031100">
    <property type="entry name" value="LOG_fam"/>
</dbReference>
<dbReference type="NCBIfam" id="TIGR00730">
    <property type="entry name" value="Rossman fold protein, TIGR00730 family"/>
    <property type="match status" value="1"/>
</dbReference>
<dbReference type="PANTHER" id="PTHR31223">
    <property type="entry name" value="LOG FAMILY PROTEIN YJL055W"/>
    <property type="match status" value="1"/>
</dbReference>
<dbReference type="PANTHER" id="PTHR31223:SF70">
    <property type="entry name" value="LOG FAMILY PROTEIN YJL055W"/>
    <property type="match status" value="1"/>
</dbReference>
<dbReference type="Pfam" id="PF03641">
    <property type="entry name" value="Lysine_decarbox"/>
    <property type="match status" value="1"/>
</dbReference>
<dbReference type="SUPFAM" id="SSF102405">
    <property type="entry name" value="MCP/YpsA-like"/>
    <property type="match status" value="1"/>
</dbReference>
<organism>
    <name type="scientific">Oryza sativa subsp. japonica</name>
    <name type="common">Rice</name>
    <dbReference type="NCBI Taxonomy" id="39947"/>
    <lineage>
        <taxon>Eukaryota</taxon>
        <taxon>Viridiplantae</taxon>
        <taxon>Streptophyta</taxon>
        <taxon>Embryophyta</taxon>
        <taxon>Tracheophyta</taxon>
        <taxon>Spermatophyta</taxon>
        <taxon>Magnoliopsida</taxon>
        <taxon>Liliopsida</taxon>
        <taxon>Poales</taxon>
        <taxon>Poaceae</taxon>
        <taxon>BOP clade</taxon>
        <taxon>Oryzoideae</taxon>
        <taxon>Oryzeae</taxon>
        <taxon>Oryzinae</taxon>
        <taxon>Oryza</taxon>
        <taxon>Oryza sativa</taxon>
    </lineage>
</organism>
<proteinExistence type="evidence at protein level"/>
<gene>
    <name type="primary">LOG</name>
    <name type="ordered locus">Os01g0588900</name>
    <name type="ordered locus">LOC_Os01g40630</name>
    <name type="ORF">OsJ_02411</name>
    <name type="ORF">P0415C01.3</name>
</gene>
<evidence type="ECO:0000250" key="1">
    <source>
        <dbReference type="UniProtKB" id="B2HS63"/>
    </source>
</evidence>
<evidence type="ECO:0000256" key="2">
    <source>
        <dbReference type="SAM" id="MobiDB-lite"/>
    </source>
</evidence>
<evidence type="ECO:0000269" key="3">
    <source>
    </source>
</evidence>
<evidence type="ECO:0000269" key="4">
    <source>
    </source>
</evidence>
<evidence type="ECO:0000305" key="5"/>
<keyword id="KW-0203">Cytokinin biosynthesis</keyword>
<keyword id="KW-0963">Cytoplasm</keyword>
<keyword id="KW-0378">Hydrolase</keyword>
<keyword id="KW-1185">Reference proteome</keyword>